<keyword id="KW-0067">ATP-binding</keyword>
<keyword id="KW-0092">Biotin</keyword>
<keyword id="KW-0275">Fatty acid biosynthesis</keyword>
<keyword id="KW-0276">Fatty acid metabolism</keyword>
<keyword id="KW-0436">Ligase</keyword>
<keyword id="KW-0444">Lipid biosynthesis</keyword>
<keyword id="KW-0443">Lipid metabolism</keyword>
<keyword id="KW-0460">Magnesium</keyword>
<keyword id="KW-0464">Manganese</keyword>
<keyword id="KW-0479">Metal-binding</keyword>
<keyword id="KW-0547">Nucleotide-binding</keyword>
<keyword id="KW-1185">Reference proteome</keyword>
<organism>
    <name type="scientific">Nostoc sp. (strain PCC 7120 / SAG 25.82 / UTEX 2576)</name>
    <dbReference type="NCBI Taxonomy" id="103690"/>
    <lineage>
        <taxon>Bacteria</taxon>
        <taxon>Bacillati</taxon>
        <taxon>Cyanobacteriota</taxon>
        <taxon>Cyanophyceae</taxon>
        <taxon>Nostocales</taxon>
        <taxon>Nostocaceae</taxon>
        <taxon>Nostoc</taxon>
    </lineage>
</organism>
<evidence type="ECO:0000250" key="1">
    <source>
        <dbReference type="UniProtKB" id="P24182"/>
    </source>
</evidence>
<evidence type="ECO:0000255" key="2">
    <source>
        <dbReference type="PROSITE-ProRule" id="PRU00409"/>
    </source>
</evidence>
<evidence type="ECO:0000305" key="3"/>
<reference key="1">
    <citation type="journal article" date="1993" name="J. Bacteriol.">
        <title>Genes for two subunits of acetyl coenzyme A carboxylase of Anabaena sp. strain PCC 7120: biotin carboxylase and biotin carboxyl carrier protein.</title>
        <authorList>
            <person name="Gornicki P."/>
            <person name="Scappino L.A."/>
            <person name="Haselkorn R."/>
        </authorList>
    </citation>
    <scope>NUCLEOTIDE SEQUENCE [GENOMIC DNA]</scope>
</reference>
<reference key="2">
    <citation type="journal article" date="2001" name="DNA Res.">
        <title>Complete genomic sequence of the filamentous nitrogen-fixing cyanobacterium Anabaena sp. strain PCC 7120.</title>
        <authorList>
            <person name="Kaneko T."/>
            <person name="Nakamura Y."/>
            <person name="Wolk C.P."/>
            <person name="Kuritz T."/>
            <person name="Sasamoto S."/>
            <person name="Watanabe A."/>
            <person name="Iriguchi M."/>
            <person name="Ishikawa A."/>
            <person name="Kawashima K."/>
            <person name="Kimura T."/>
            <person name="Kishida Y."/>
            <person name="Kohara M."/>
            <person name="Matsumoto M."/>
            <person name="Matsuno A."/>
            <person name="Muraki A."/>
            <person name="Nakazaki N."/>
            <person name="Shimpo S."/>
            <person name="Sugimoto M."/>
            <person name="Takazawa M."/>
            <person name="Yamada M."/>
            <person name="Yasuda M."/>
            <person name="Tabata S."/>
        </authorList>
    </citation>
    <scope>NUCLEOTIDE SEQUENCE [LARGE SCALE GENOMIC DNA]</scope>
    <source>
        <strain>PCC 7120 / SAG 25.82 / UTEX 2576</strain>
    </source>
</reference>
<dbReference type="EC" id="6.3.4.14" evidence="1"/>
<dbReference type="EMBL" id="L14862">
    <property type="protein sequence ID" value="AAB51770.1"/>
    <property type="molecule type" value="Genomic_DNA"/>
</dbReference>
<dbReference type="EMBL" id="BA000019">
    <property type="protein sequence ID" value="BAB72896.1"/>
    <property type="molecule type" value="Genomic_DNA"/>
</dbReference>
<dbReference type="PIR" id="A53311">
    <property type="entry name" value="A53311"/>
</dbReference>
<dbReference type="PIR" id="AH1923">
    <property type="entry name" value="AH1923"/>
</dbReference>
<dbReference type="RefSeq" id="WP_010995113.1">
    <property type="nucleotide sequence ID" value="NZ_RSCN01000006.1"/>
</dbReference>
<dbReference type="SMR" id="Q06862"/>
<dbReference type="STRING" id="103690.gene:10492953"/>
<dbReference type="KEGG" id="ana:alr0939"/>
<dbReference type="eggNOG" id="COG0439">
    <property type="taxonomic scope" value="Bacteria"/>
</dbReference>
<dbReference type="OrthoDB" id="9807469at2"/>
<dbReference type="UniPathway" id="UPA00655">
    <property type="reaction ID" value="UER00711"/>
</dbReference>
<dbReference type="Proteomes" id="UP000002483">
    <property type="component" value="Chromosome"/>
</dbReference>
<dbReference type="GO" id="GO:0003989">
    <property type="term" value="F:acetyl-CoA carboxylase activity"/>
    <property type="evidence" value="ECO:0007669"/>
    <property type="project" value="UniProtKB-EC"/>
</dbReference>
<dbReference type="GO" id="GO:0005524">
    <property type="term" value="F:ATP binding"/>
    <property type="evidence" value="ECO:0007669"/>
    <property type="project" value="UniProtKB-KW"/>
</dbReference>
<dbReference type="GO" id="GO:0004075">
    <property type="term" value="F:biotin carboxylase activity"/>
    <property type="evidence" value="ECO:0007669"/>
    <property type="project" value="UniProtKB-EC"/>
</dbReference>
<dbReference type="GO" id="GO:0046872">
    <property type="term" value="F:metal ion binding"/>
    <property type="evidence" value="ECO:0007669"/>
    <property type="project" value="UniProtKB-KW"/>
</dbReference>
<dbReference type="GO" id="GO:0006633">
    <property type="term" value="P:fatty acid biosynthetic process"/>
    <property type="evidence" value="ECO:0007669"/>
    <property type="project" value="UniProtKB-KW"/>
</dbReference>
<dbReference type="GO" id="GO:2001295">
    <property type="term" value="P:malonyl-CoA biosynthetic process"/>
    <property type="evidence" value="ECO:0007669"/>
    <property type="project" value="UniProtKB-UniPathway"/>
</dbReference>
<dbReference type="FunFam" id="3.30.1490.20:FF:000018">
    <property type="entry name" value="Biotin carboxylase"/>
    <property type="match status" value="1"/>
</dbReference>
<dbReference type="FunFam" id="3.30.470.20:FF:000028">
    <property type="entry name" value="Methylcrotonoyl-CoA carboxylase subunit alpha, mitochondrial"/>
    <property type="match status" value="1"/>
</dbReference>
<dbReference type="FunFam" id="3.40.50.20:FF:000010">
    <property type="entry name" value="Propionyl-CoA carboxylase subunit alpha"/>
    <property type="match status" value="1"/>
</dbReference>
<dbReference type="Gene3D" id="3.30.470.20">
    <property type="entry name" value="ATP-grasp fold, B domain"/>
    <property type="match status" value="1"/>
</dbReference>
<dbReference type="InterPro" id="IPR051602">
    <property type="entry name" value="ACC_Biotin_Carboxylase"/>
</dbReference>
<dbReference type="InterPro" id="IPR004549">
    <property type="entry name" value="Acetyl_CoA_COase_biotin_COase"/>
</dbReference>
<dbReference type="InterPro" id="IPR011761">
    <property type="entry name" value="ATP-grasp"/>
</dbReference>
<dbReference type="InterPro" id="IPR005481">
    <property type="entry name" value="BC-like_N"/>
</dbReference>
<dbReference type="InterPro" id="IPR011764">
    <property type="entry name" value="Biotin_carboxylation_dom"/>
</dbReference>
<dbReference type="InterPro" id="IPR005482">
    <property type="entry name" value="Biotin_COase_C"/>
</dbReference>
<dbReference type="InterPro" id="IPR005479">
    <property type="entry name" value="CbamoylP_synth_lsu-like_ATP-bd"/>
</dbReference>
<dbReference type="InterPro" id="IPR016185">
    <property type="entry name" value="PreATP-grasp_dom_sf"/>
</dbReference>
<dbReference type="InterPro" id="IPR011054">
    <property type="entry name" value="Rudment_hybrid_motif"/>
</dbReference>
<dbReference type="NCBIfam" id="TIGR00514">
    <property type="entry name" value="accC"/>
    <property type="match status" value="1"/>
</dbReference>
<dbReference type="NCBIfam" id="NF006367">
    <property type="entry name" value="PRK08591.1"/>
    <property type="match status" value="1"/>
</dbReference>
<dbReference type="PANTHER" id="PTHR48095:SF2">
    <property type="entry name" value="BIOTIN CARBOXYLASE, CHLOROPLASTIC"/>
    <property type="match status" value="1"/>
</dbReference>
<dbReference type="PANTHER" id="PTHR48095">
    <property type="entry name" value="PYRUVATE CARBOXYLASE SUBUNIT A"/>
    <property type="match status" value="1"/>
</dbReference>
<dbReference type="Pfam" id="PF02785">
    <property type="entry name" value="Biotin_carb_C"/>
    <property type="match status" value="1"/>
</dbReference>
<dbReference type="Pfam" id="PF00289">
    <property type="entry name" value="Biotin_carb_N"/>
    <property type="match status" value="1"/>
</dbReference>
<dbReference type="Pfam" id="PF02786">
    <property type="entry name" value="CPSase_L_D2"/>
    <property type="match status" value="1"/>
</dbReference>
<dbReference type="SMART" id="SM00878">
    <property type="entry name" value="Biotin_carb_C"/>
    <property type="match status" value="1"/>
</dbReference>
<dbReference type="SUPFAM" id="SSF56059">
    <property type="entry name" value="Glutathione synthetase ATP-binding domain-like"/>
    <property type="match status" value="1"/>
</dbReference>
<dbReference type="SUPFAM" id="SSF52440">
    <property type="entry name" value="PreATP-grasp domain"/>
    <property type="match status" value="1"/>
</dbReference>
<dbReference type="SUPFAM" id="SSF51246">
    <property type="entry name" value="Rudiment single hybrid motif"/>
    <property type="match status" value="1"/>
</dbReference>
<dbReference type="PROSITE" id="PS50975">
    <property type="entry name" value="ATP_GRASP"/>
    <property type="match status" value="1"/>
</dbReference>
<dbReference type="PROSITE" id="PS50979">
    <property type="entry name" value="BC"/>
    <property type="match status" value="1"/>
</dbReference>
<dbReference type="PROSITE" id="PS00866">
    <property type="entry name" value="CPSASE_1"/>
    <property type="match status" value="1"/>
</dbReference>
<dbReference type="PROSITE" id="PS00867">
    <property type="entry name" value="CPSASE_2"/>
    <property type="match status" value="1"/>
</dbReference>
<name>ACCC_NOSS1</name>
<comment type="function">
    <text evidence="1">This protein is a component of the acetyl coenzyme A carboxylase complex; first, biotin carboxylase catalyzes the carboxylation of the carrier protein and then the transcarboxylase transfers the carboxyl group to form malonyl-CoA.</text>
</comment>
<comment type="catalytic activity">
    <reaction evidence="1">
        <text>N(6)-biotinyl-L-lysyl-[protein] + hydrogencarbonate + ATP = N(6)-carboxybiotinyl-L-lysyl-[protein] + ADP + phosphate + H(+)</text>
        <dbReference type="Rhea" id="RHEA:13501"/>
        <dbReference type="Rhea" id="RHEA-COMP:10505"/>
        <dbReference type="Rhea" id="RHEA-COMP:10506"/>
        <dbReference type="ChEBI" id="CHEBI:15378"/>
        <dbReference type="ChEBI" id="CHEBI:17544"/>
        <dbReference type="ChEBI" id="CHEBI:30616"/>
        <dbReference type="ChEBI" id="CHEBI:43474"/>
        <dbReference type="ChEBI" id="CHEBI:83144"/>
        <dbReference type="ChEBI" id="CHEBI:83145"/>
        <dbReference type="ChEBI" id="CHEBI:456216"/>
        <dbReference type="EC" id="6.3.4.14"/>
    </reaction>
</comment>
<comment type="cofactor">
    <cofactor evidence="2">
        <name>Mg(2+)</name>
        <dbReference type="ChEBI" id="CHEBI:18420"/>
    </cofactor>
    <cofactor evidence="2">
        <name>Mn(2+)</name>
        <dbReference type="ChEBI" id="CHEBI:29035"/>
    </cofactor>
    <text evidence="2">Binds 2 magnesium or manganese ions per subunit.</text>
</comment>
<comment type="pathway">
    <text evidence="1">Lipid metabolism; malonyl-CoA biosynthesis; malonyl-CoA from acetyl-CoA: step 1/1.</text>
</comment>
<comment type="subunit">
    <text evidence="1">Acetyl-CoA carboxylase is a heterohexamer of biotin carboxyl carrier protein, biotin carboxylase and the two subunits of carboxyl transferase in a 2:2 complex.</text>
</comment>
<feature type="chain" id="PRO_0000146787" description="Biotin carboxylase">
    <location>
        <begin position="1"/>
        <end position="447"/>
    </location>
</feature>
<feature type="domain" description="Biotin carboxylation">
    <location>
        <begin position="1"/>
        <end position="447"/>
    </location>
</feature>
<feature type="domain" description="ATP-grasp" evidence="2">
    <location>
        <begin position="121"/>
        <end position="318"/>
    </location>
</feature>
<feature type="active site" evidence="1">
    <location>
        <position position="293"/>
    </location>
</feature>
<feature type="binding site" evidence="1">
    <location>
        <position position="117"/>
    </location>
    <ligand>
        <name>ATP</name>
        <dbReference type="ChEBI" id="CHEBI:30616"/>
    </ligand>
</feature>
<feature type="binding site" evidence="1">
    <location>
        <position position="159"/>
    </location>
    <ligand>
        <name>ATP</name>
        <dbReference type="ChEBI" id="CHEBI:30616"/>
    </ligand>
</feature>
<feature type="binding site" evidence="1">
    <location>
        <begin position="165"/>
        <end position="166"/>
    </location>
    <ligand>
        <name>ATP</name>
        <dbReference type="ChEBI" id="CHEBI:30616"/>
    </ligand>
</feature>
<feature type="binding site" evidence="1">
    <location>
        <begin position="201"/>
        <end position="204"/>
    </location>
    <ligand>
        <name>ATP</name>
        <dbReference type="ChEBI" id="CHEBI:30616"/>
    </ligand>
</feature>
<feature type="binding site" evidence="1">
    <location>
        <position position="209"/>
    </location>
    <ligand>
        <name>ATP</name>
        <dbReference type="ChEBI" id="CHEBI:30616"/>
    </ligand>
</feature>
<feature type="binding site" evidence="1">
    <location>
        <position position="238"/>
    </location>
    <ligand>
        <name>hydrogencarbonate</name>
        <dbReference type="ChEBI" id="CHEBI:17544"/>
    </ligand>
</feature>
<feature type="binding site" evidence="1">
    <location>
        <position position="276"/>
    </location>
    <ligand>
        <name>ATP</name>
        <dbReference type="ChEBI" id="CHEBI:30616"/>
    </ligand>
</feature>
<feature type="binding site" evidence="2">
    <location>
        <position position="276"/>
    </location>
    <ligand>
        <name>Mg(2+)</name>
        <dbReference type="ChEBI" id="CHEBI:18420"/>
        <label>1</label>
    </ligand>
</feature>
<feature type="binding site" evidence="2">
    <location>
        <position position="276"/>
    </location>
    <ligand>
        <name>Mn(2+)</name>
        <dbReference type="ChEBI" id="CHEBI:29035"/>
        <label>1</label>
    </ligand>
</feature>
<feature type="binding site" evidence="1">
    <location>
        <position position="289"/>
    </location>
    <ligand>
        <name>ATP</name>
        <dbReference type="ChEBI" id="CHEBI:30616"/>
    </ligand>
</feature>
<feature type="binding site" evidence="2">
    <location>
        <position position="289"/>
    </location>
    <ligand>
        <name>Mg(2+)</name>
        <dbReference type="ChEBI" id="CHEBI:18420"/>
        <label>1</label>
    </ligand>
</feature>
<feature type="binding site" evidence="2">
    <location>
        <position position="289"/>
    </location>
    <ligand>
        <name>Mg(2+)</name>
        <dbReference type="ChEBI" id="CHEBI:18420"/>
        <label>2</label>
    </ligand>
</feature>
<feature type="binding site" evidence="2">
    <location>
        <position position="289"/>
    </location>
    <ligand>
        <name>Mn(2+)</name>
        <dbReference type="ChEBI" id="CHEBI:29035"/>
        <label>1</label>
    </ligand>
</feature>
<feature type="binding site" evidence="2">
    <location>
        <position position="289"/>
    </location>
    <ligand>
        <name>Mn(2+)</name>
        <dbReference type="ChEBI" id="CHEBI:29035"/>
        <label>2</label>
    </ligand>
</feature>
<feature type="binding site" evidence="2">
    <location>
        <position position="291"/>
    </location>
    <ligand>
        <name>Mg(2+)</name>
        <dbReference type="ChEBI" id="CHEBI:18420"/>
        <label>2</label>
    </ligand>
</feature>
<feature type="binding site" evidence="2">
    <location>
        <position position="291"/>
    </location>
    <ligand>
        <name>Mn(2+)</name>
        <dbReference type="ChEBI" id="CHEBI:29035"/>
        <label>2</label>
    </ligand>
</feature>
<feature type="binding site" evidence="1">
    <location>
        <position position="293"/>
    </location>
    <ligand>
        <name>hydrogencarbonate</name>
        <dbReference type="ChEBI" id="CHEBI:17544"/>
    </ligand>
</feature>
<feature type="binding site" evidence="1">
    <location>
        <position position="296"/>
    </location>
    <ligand>
        <name>hydrogencarbonate</name>
        <dbReference type="ChEBI" id="CHEBI:17544"/>
    </ligand>
</feature>
<feature type="binding site" evidence="1">
    <location>
        <position position="339"/>
    </location>
    <ligand>
        <name>biotin</name>
        <dbReference type="ChEBI" id="CHEBI:57586"/>
    </ligand>
</feature>
<feature type="binding site" evidence="1">
    <location>
        <position position="339"/>
    </location>
    <ligand>
        <name>hydrogencarbonate</name>
        <dbReference type="ChEBI" id="CHEBI:17544"/>
    </ligand>
</feature>
<proteinExistence type="inferred from homology"/>
<gene>
    <name type="primary">accC</name>
    <name type="ordered locus">alr0939</name>
</gene>
<sequence length="447" mass="49104">MKFDKILIANRGEIALRILRACEEMGIATIAVHSTVDRNALHVQLADEAVCIGEPASAKSYLNIPNIIAAALTRNASAIHPGYGFLSENAKFAEICADHHIAFIGPTPEAIRLMGDKSTAKETMQKAGVPTVPGSEGLVETEQEGLELAKDIGYPVMIKATAGGGGRGMRLVRSPDEFVKLFLAAQGEAGAAFGNAGVYIEKFIERPRHIEFQILADNYGNVIHLGERDCSIQRRNQKLLEEAPSPALDSDLREKMGQAAVKAAQFINYTGAGTIEFLLDRSGQFYFMEMNTRIQVEHPVTEMVTGVDLLVEQIRIAQGERLRLTQDQVVLRGHAIECRINAEDPDHDFRPAPGRISGYLPPGGPGVRIDSHVYTDYQIPPYYDSLIGKLIVWGPDRATAINRMKRALRECAITGLPTTIGFHQRIMENPQFLQGNVSTSFVQEMNK</sequence>
<protein>
    <recommendedName>
        <fullName>Biotin carboxylase</fullName>
        <ecNumber evidence="1">6.3.4.14</ecNumber>
    </recommendedName>
    <alternativeName>
        <fullName evidence="3">Acetyl-coenzyme A carboxylase biotin carboxylase subunit A</fullName>
    </alternativeName>
</protein>
<accession>Q06862</accession>